<comment type="function">
    <text evidence="1">Catalyzes the methylthiolation of N6-(dimethylallyl)adenosine (i(6)A), leading to the formation of 2-methylthio-N6-(dimethylallyl)adenosine (ms(2)i(6)A) at position 37 in tRNAs that read codons beginning with uridine.</text>
</comment>
<comment type="catalytic activity">
    <reaction evidence="1">
        <text>N(6)-dimethylallyladenosine(37) in tRNA + (sulfur carrier)-SH + AH2 + 2 S-adenosyl-L-methionine = 2-methylsulfanyl-N(6)-dimethylallyladenosine(37) in tRNA + (sulfur carrier)-H + 5'-deoxyadenosine + L-methionine + A + S-adenosyl-L-homocysteine + 2 H(+)</text>
        <dbReference type="Rhea" id="RHEA:37067"/>
        <dbReference type="Rhea" id="RHEA-COMP:10375"/>
        <dbReference type="Rhea" id="RHEA-COMP:10376"/>
        <dbReference type="Rhea" id="RHEA-COMP:14737"/>
        <dbReference type="Rhea" id="RHEA-COMP:14739"/>
        <dbReference type="ChEBI" id="CHEBI:13193"/>
        <dbReference type="ChEBI" id="CHEBI:15378"/>
        <dbReference type="ChEBI" id="CHEBI:17319"/>
        <dbReference type="ChEBI" id="CHEBI:17499"/>
        <dbReference type="ChEBI" id="CHEBI:29917"/>
        <dbReference type="ChEBI" id="CHEBI:57844"/>
        <dbReference type="ChEBI" id="CHEBI:57856"/>
        <dbReference type="ChEBI" id="CHEBI:59789"/>
        <dbReference type="ChEBI" id="CHEBI:64428"/>
        <dbReference type="ChEBI" id="CHEBI:74415"/>
        <dbReference type="ChEBI" id="CHEBI:74417"/>
        <dbReference type="EC" id="2.8.4.3"/>
    </reaction>
</comment>
<comment type="cofactor">
    <cofactor evidence="1">
        <name>[4Fe-4S] cluster</name>
        <dbReference type="ChEBI" id="CHEBI:49883"/>
    </cofactor>
    <text evidence="1">Binds 2 [4Fe-4S] clusters. One cluster is coordinated with 3 cysteines and an exchangeable S-adenosyl-L-methionine.</text>
</comment>
<comment type="subunit">
    <text evidence="1">Monomer.</text>
</comment>
<comment type="subcellular location">
    <subcellularLocation>
        <location evidence="1">Cytoplasm</location>
    </subcellularLocation>
</comment>
<comment type="similarity">
    <text evidence="1">Belongs to the methylthiotransferase family. MiaB subfamily.</text>
</comment>
<comment type="sequence caution" evidence="3">
    <conflict type="erroneous initiation">
        <sequence resource="EMBL-CDS" id="ABM29020"/>
    </conflict>
</comment>
<accession>A1VF04</accession>
<protein>
    <recommendedName>
        <fullName evidence="1">tRNA-2-methylthio-N(6)-dimethylallyladenosine synthase</fullName>
        <ecNumber evidence="1">2.8.4.3</ecNumber>
    </recommendedName>
    <alternativeName>
        <fullName evidence="1">(Dimethylallyl)adenosine tRNA methylthiotransferase MiaB</fullName>
    </alternativeName>
    <alternativeName>
        <fullName evidence="1">tRNA-i(6)A37 methylthiotransferase</fullName>
    </alternativeName>
</protein>
<organism>
    <name type="scientific">Nitratidesulfovibrio vulgaris (strain DP4)</name>
    <name type="common">Desulfovibrio vulgaris</name>
    <dbReference type="NCBI Taxonomy" id="391774"/>
    <lineage>
        <taxon>Bacteria</taxon>
        <taxon>Pseudomonadati</taxon>
        <taxon>Thermodesulfobacteriota</taxon>
        <taxon>Desulfovibrionia</taxon>
        <taxon>Desulfovibrionales</taxon>
        <taxon>Desulfovibrionaceae</taxon>
        <taxon>Nitratidesulfovibrio</taxon>
    </lineage>
</organism>
<dbReference type="EC" id="2.8.4.3" evidence="1"/>
<dbReference type="EMBL" id="CP000527">
    <property type="protein sequence ID" value="ABM29020.1"/>
    <property type="status" value="ALT_INIT"/>
    <property type="molecule type" value="Genomic_DNA"/>
</dbReference>
<dbReference type="RefSeq" id="WP_043629470.1">
    <property type="nucleotide sequence ID" value="NC_008751.1"/>
</dbReference>
<dbReference type="SMR" id="A1VF04"/>
<dbReference type="KEGG" id="dvl:Dvul_2004"/>
<dbReference type="HOGENOM" id="CLU_018697_2_0_7"/>
<dbReference type="Proteomes" id="UP000009173">
    <property type="component" value="Chromosome"/>
</dbReference>
<dbReference type="GO" id="GO:0005829">
    <property type="term" value="C:cytosol"/>
    <property type="evidence" value="ECO:0007669"/>
    <property type="project" value="TreeGrafter"/>
</dbReference>
<dbReference type="GO" id="GO:0051539">
    <property type="term" value="F:4 iron, 4 sulfur cluster binding"/>
    <property type="evidence" value="ECO:0007669"/>
    <property type="project" value="UniProtKB-UniRule"/>
</dbReference>
<dbReference type="GO" id="GO:0046872">
    <property type="term" value="F:metal ion binding"/>
    <property type="evidence" value="ECO:0007669"/>
    <property type="project" value="UniProtKB-KW"/>
</dbReference>
<dbReference type="GO" id="GO:0035597">
    <property type="term" value="F:N6-isopentenyladenosine methylthiotransferase activity"/>
    <property type="evidence" value="ECO:0007669"/>
    <property type="project" value="TreeGrafter"/>
</dbReference>
<dbReference type="CDD" id="cd01335">
    <property type="entry name" value="Radical_SAM"/>
    <property type="match status" value="1"/>
</dbReference>
<dbReference type="FunFam" id="3.40.50.12160:FF:000003">
    <property type="entry name" value="CDK5 regulatory subunit-associated protein 1"/>
    <property type="match status" value="1"/>
</dbReference>
<dbReference type="FunFam" id="3.80.30.20:FF:000001">
    <property type="entry name" value="tRNA-2-methylthio-N(6)-dimethylallyladenosine synthase 2"/>
    <property type="match status" value="1"/>
</dbReference>
<dbReference type="Gene3D" id="3.40.50.12160">
    <property type="entry name" value="Methylthiotransferase, N-terminal domain"/>
    <property type="match status" value="1"/>
</dbReference>
<dbReference type="Gene3D" id="3.80.30.20">
    <property type="entry name" value="tm_1862 like domain"/>
    <property type="match status" value="1"/>
</dbReference>
<dbReference type="HAMAP" id="MF_01864">
    <property type="entry name" value="tRNA_metthiotr_MiaB"/>
    <property type="match status" value="1"/>
</dbReference>
<dbReference type="InterPro" id="IPR006638">
    <property type="entry name" value="Elp3/MiaA/NifB-like_rSAM"/>
</dbReference>
<dbReference type="InterPro" id="IPR005839">
    <property type="entry name" value="Methylthiotransferase"/>
</dbReference>
<dbReference type="InterPro" id="IPR020612">
    <property type="entry name" value="Methylthiotransferase_CS"/>
</dbReference>
<dbReference type="InterPro" id="IPR013848">
    <property type="entry name" value="Methylthiotransferase_N"/>
</dbReference>
<dbReference type="InterPro" id="IPR038135">
    <property type="entry name" value="Methylthiotransferase_N_sf"/>
</dbReference>
<dbReference type="InterPro" id="IPR006463">
    <property type="entry name" value="MiaB_methiolase"/>
</dbReference>
<dbReference type="InterPro" id="IPR007197">
    <property type="entry name" value="rSAM"/>
</dbReference>
<dbReference type="InterPro" id="IPR023404">
    <property type="entry name" value="rSAM_horseshoe"/>
</dbReference>
<dbReference type="InterPro" id="IPR002792">
    <property type="entry name" value="TRAM_dom"/>
</dbReference>
<dbReference type="NCBIfam" id="TIGR01574">
    <property type="entry name" value="miaB-methiolase"/>
    <property type="match status" value="1"/>
</dbReference>
<dbReference type="NCBIfam" id="TIGR00089">
    <property type="entry name" value="MiaB/RimO family radical SAM methylthiotransferase"/>
    <property type="match status" value="1"/>
</dbReference>
<dbReference type="PANTHER" id="PTHR43020">
    <property type="entry name" value="CDK5 REGULATORY SUBUNIT-ASSOCIATED PROTEIN 1"/>
    <property type="match status" value="1"/>
</dbReference>
<dbReference type="PANTHER" id="PTHR43020:SF2">
    <property type="entry name" value="MITOCHONDRIAL TRNA METHYLTHIOTRANSFERASE CDK5RAP1"/>
    <property type="match status" value="1"/>
</dbReference>
<dbReference type="Pfam" id="PF04055">
    <property type="entry name" value="Radical_SAM"/>
    <property type="match status" value="1"/>
</dbReference>
<dbReference type="Pfam" id="PF00919">
    <property type="entry name" value="UPF0004"/>
    <property type="match status" value="1"/>
</dbReference>
<dbReference type="SFLD" id="SFLDF00273">
    <property type="entry name" value="(dimethylallyl)adenosine_tRNA"/>
    <property type="match status" value="1"/>
</dbReference>
<dbReference type="SFLD" id="SFLDG01082">
    <property type="entry name" value="B12-binding_domain_containing"/>
    <property type="match status" value="1"/>
</dbReference>
<dbReference type="SFLD" id="SFLDS00029">
    <property type="entry name" value="Radical_SAM"/>
    <property type="match status" value="1"/>
</dbReference>
<dbReference type="SMART" id="SM00729">
    <property type="entry name" value="Elp3"/>
    <property type="match status" value="1"/>
</dbReference>
<dbReference type="SUPFAM" id="SSF102114">
    <property type="entry name" value="Radical SAM enzymes"/>
    <property type="match status" value="1"/>
</dbReference>
<dbReference type="PROSITE" id="PS51449">
    <property type="entry name" value="MTTASE_N"/>
    <property type="match status" value="1"/>
</dbReference>
<dbReference type="PROSITE" id="PS01278">
    <property type="entry name" value="MTTASE_RADICAL"/>
    <property type="match status" value="1"/>
</dbReference>
<dbReference type="PROSITE" id="PS51918">
    <property type="entry name" value="RADICAL_SAM"/>
    <property type="match status" value="1"/>
</dbReference>
<dbReference type="PROSITE" id="PS50926">
    <property type="entry name" value="TRAM"/>
    <property type="match status" value="1"/>
</dbReference>
<keyword id="KW-0004">4Fe-4S</keyword>
<keyword id="KW-0963">Cytoplasm</keyword>
<keyword id="KW-0408">Iron</keyword>
<keyword id="KW-0411">Iron-sulfur</keyword>
<keyword id="KW-0479">Metal-binding</keyword>
<keyword id="KW-0949">S-adenosyl-L-methionine</keyword>
<keyword id="KW-0808">Transferase</keyword>
<keyword id="KW-0819">tRNA processing</keyword>
<evidence type="ECO:0000255" key="1">
    <source>
        <dbReference type="HAMAP-Rule" id="MF_01864"/>
    </source>
</evidence>
<evidence type="ECO:0000255" key="2">
    <source>
        <dbReference type="PROSITE-ProRule" id="PRU01266"/>
    </source>
</evidence>
<evidence type="ECO:0000305" key="3"/>
<reference key="1">
    <citation type="journal article" date="2009" name="Environ. Microbiol.">
        <title>Contribution of mobile genetic elements to Desulfovibrio vulgaris genome plasticity.</title>
        <authorList>
            <person name="Walker C.B."/>
            <person name="Stolyar S."/>
            <person name="Chivian D."/>
            <person name="Pinel N."/>
            <person name="Gabster J.A."/>
            <person name="Dehal P.S."/>
            <person name="He Z."/>
            <person name="Yang Z.K."/>
            <person name="Yen H.C."/>
            <person name="Zhou J."/>
            <person name="Wall J.D."/>
            <person name="Hazen T.C."/>
            <person name="Arkin A.P."/>
            <person name="Stahl D.A."/>
        </authorList>
    </citation>
    <scope>NUCLEOTIDE SEQUENCE [LARGE SCALE GENOMIC DNA]</scope>
    <source>
        <strain>DP4</strain>
    </source>
</reference>
<sequence>MHDRTFHIETFGCQMNVNDSDWLARALMERGFSPAPFGEARLTIVNTCSVRDKPEQKVYSLLGRIRQATGKKPDAFVAVGGCVAQQIGSGFFSRFPQVRLVFGTDGLAMAPQALDRLVEEPDLKLSLLDFSEDYPERDAVLGQGAVPASVFVNIMQGCDNFCAYCIVPYTRGRQKSRATGTILDECRALLDRGAREITLLGQNVNSFGQDSHGDGTTFAQLLHKVAALPGLERLRFVTPHPKDIAPEVVEAFGTLPNLCPRLHLPLQAGSDRILKLMGRRYDMARYLRIVDDLRAARPDIVLSSDIIVGFPGETEEDFMETMGALETVGYAASYSFCYSDRPGTRAEMLPDKLSREVKLERLERLQTLQNRLTERCLQDMVGKKVEVLLEGMSRKPGDEGDSWQGRDPYGNLVNVALPQGSDVRGRFLPVVVAQAKKHSLLAEQAGAPW</sequence>
<proteinExistence type="inferred from homology"/>
<gene>
    <name evidence="1" type="primary">miaB</name>
    <name type="ordered locus">Dvul_2004</name>
</gene>
<feature type="chain" id="PRO_0000374268" description="tRNA-2-methylthio-N(6)-dimethylallyladenosine synthase">
    <location>
        <begin position="1"/>
        <end position="449"/>
    </location>
</feature>
<feature type="domain" description="MTTase N-terminal" evidence="1">
    <location>
        <begin position="4"/>
        <end position="119"/>
    </location>
</feature>
<feature type="domain" description="Radical SAM core" evidence="2">
    <location>
        <begin position="144"/>
        <end position="375"/>
    </location>
</feature>
<feature type="domain" description="TRAM" evidence="1">
    <location>
        <begin position="378"/>
        <end position="446"/>
    </location>
</feature>
<feature type="binding site" evidence="1">
    <location>
        <position position="13"/>
    </location>
    <ligand>
        <name>[4Fe-4S] cluster</name>
        <dbReference type="ChEBI" id="CHEBI:49883"/>
        <label>1</label>
    </ligand>
</feature>
<feature type="binding site" evidence="1">
    <location>
        <position position="48"/>
    </location>
    <ligand>
        <name>[4Fe-4S] cluster</name>
        <dbReference type="ChEBI" id="CHEBI:49883"/>
        <label>1</label>
    </ligand>
</feature>
<feature type="binding site" evidence="1">
    <location>
        <position position="82"/>
    </location>
    <ligand>
        <name>[4Fe-4S] cluster</name>
        <dbReference type="ChEBI" id="CHEBI:49883"/>
        <label>1</label>
    </ligand>
</feature>
<feature type="binding site" evidence="1">
    <location>
        <position position="158"/>
    </location>
    <ligand>
        <name>[4Fe-4S] cluster</name>
        <dbReference type="ChEBI" id="CHEBI:49883"/>
        <label>2</label>
        <note>4Fe-4S-S-AdoMet</note>
    </ligand>
</feature>
<feature type="binding site" evidence="1">
    <location>
        <position position="162"/>
    </location>
    <ligand>
        <name>[4Fe-4S] cluster</name>
        <dbReference type="ChEBI" id="CHEBI:49883"/>
        <label>2</label>
        <note>4Fe-4S-S-AdoMet</note>
    </ligand>
</feature>
<feature type="binding site" evidence="1">
    <location>
        <position position="165"/>
    </location>
    <ligand>
        <name>[4Fe-4S] cluster</name>
        <dbReference type="ChEBI" id="CHEBI:49883"/>
        <label>2</label>
        <note>4Fe-4S-S-AdoMet</note>
    </ligand>
</feature>
<name>MIAB_NITV4</name>